<proteinExistence type="inferred from homology"/>
<protein>
    <recommendedName>
        <fullName evidence="1">5'-nucleotidase SurE</fullName>
        <ecNumber evidence="1">3.1.3.5</ecNumber>
    </recommendedName>
    <alternativeName>
        <fullName evidence="1">Nucleoside 5'-monophosphate phosphohydrolase</fullName>
    </alternativeName>
</protein>
<keyword id="KW-0963">Cytoplasm</keyword>
<keyword id="KW-0378">Hydrolase</keyword>
<keyword id="KW-0479">Metal-binding</keyword>
<keyword id="KW-0547">Nucleotide-binding</keyword>
<dbReference type="EC" id="3.1.3.5" evidence="1"/>
<dbReference type="EMBL" id="AJ965256">
    <property type="protein sequence ID" value="CAI82930.1"/>
    <property type="molecule type" value="Genomic_DNA"/>
</dbReference>
<dbReference type="RefSeq" id="WP_011309281.1">
    <property type="nucleotide sequence ID" value="NC_007356.1"/>
</dbReference>
<dbReference type="SMR" id="Q3ZXG5"/>
<dbReference type="KEGG" id="deh:cbdbA776"/>
<dbReference type="HOGENOM" id="CLU_045192_1_3_0"/>
<dbReference type="Proteomes" id="UP000000433">
    <property type="component" value="Chromosome"/>
</dbReference>
<dbReference type="GO" id="GO:0005737">
    <property type="term" value="C:cytoplasm"/>
    <property type="evidence" value="ECO:0007669"/>
    <property type="project" value="UniProtKB-SubCell"/>
</dbReference>
<dbReference type="GO" id="GO:0008253">
    <property type="term" value="F:5'-nucleotidase activity"/>
    <property type="evidence" value="ECO:0007669"/>
    <property type="project" value="UniProtKB-UniRule"/>
</dbReference>
<dbReference type="GO" id="GO:0046872">
    <property type="term" value="F:metal ion binding"/>
    <property type="evidence" value="ECO:0007669"/>
    <property type="project" value="UniProtKB-UniRule"/>
</dbReference>
<dbReference type="GO" id="GO:0000166">
    <property type="term" value="F:nucleotide binding"/>
    <property type="evidence" value="ECO:0007669"/>
    <property type="project" value="UniProtKB-KW"/>
</dbReference>
<dbReference type="Gene3D" id="3.40.1210.10">
    <property type="entry name" value="Survival protein SurE-like phosphatase/nucleotidase"/>
    <property type="match status" value="1"/>
</dbReference>
<dbReference type="HAMAP" id="MF_00060">
    <property type="entry name" value="SurE"/>
    <property type="match status" value="1"/>
</dbReference>
<dbReference type="InterPro" id="IPR030048">
    <property type="entry name" value="SurE"/>
</dbReference>
<dbReference type="InterPro" id="IPR002828">
    <property type="entry name" value="SurE-like_Pase/nucleotidase"/>
</dbReference>
<dbReference type="InterPro" id="IPR036523">
    <property type="entry name" value="SurE-like_sf"/>
</dbReference>
<dbReference type="NCBIfam" id="NF001490">
    <property type="entry name" value="PRK00346.1-4"/>
    <property type="match status" value="1"/>
</dbReference>
<dbReference type="NCBIfam" id="TIGR00087">
    <property type="entry name" value="surE"/>
    <property type="match status" value="1"/>
</dbReference>
<dbReference type="PANTHER" id="PTHR30457">
    <property type="entry name" value="5'-NUCLEOTIDASE SURE"/>
    <property type="match status" value="1"/>
</dbReference>
<dbReference type="PANTHER" id="PTHR30457:SF0">
    <property type="entry name" value="PHOSPHATASE, PUTATIVE (AFU_ORTHOLOGUE AFUA_4G01070)-RELATED"/>
    <property type="match status" value="1"/>
</dbReference>
<dbReference type="Pfam" id="PF01975">
    <property type="entry name" value="SurE"/>
    <property type="match status" value="1"/>
</dbReference>
<dbReference type="SUPFAM" id="SSF64167">
    <property type="entry name" value="SurE-like"/>
    <property type="match status" value="1"/>
</dbReference>
<name>SURE_DEHMC</name>
<comment type="function">
    <text evidence="1">Nucleotidase that shows phosphatase activity on nucleoside 5'-monophosphates.</text>
</comment>
<comment type="catalytic activity">
    <reaction evidence="1">
        <text>a ribonucleoside 5'-phosphate + H2O = a ribonucleoside + phosphate</text>
        <dbReference type="Rhea" id="RHEA:12484"/>
        <dbReference type="ChEBI" id="CHEBI:15377"/>
        <dbReference type="ChEBI" id="CHEBI:18254"/>
        <dbReference type="ChEBI" id="CHEBI:43474"/>
        <dbReference type="ChEBI" id="CHEBI:58043"/>
        <dbReference type="EC" id="3.1.3.5"/>
    </reaction>
</comment>
<comment type="cofactor">
    <cofactor evidence="1">
        <name>a divalent metal cation</name>
        <dbReference type="ChEBI" id="CHEBI:60240"/>
    </cofactor>
    <text evidence="1">Binds 1 divalent metal cation per subunit.</text>
</comment>
<comment type="subcellular location">
    <subcellularLocation>
        <location evidence="1">Cytoplasm</location>
    </subcellularLocation>
</comment>
<comment type="similarity">
    <text evidence="1">Belongs to the SurE nucleotidase family.</text>
</comment>
<accession>Q3ZXG5</accession>
<gene>
    <name evidence="1" type="primary">surE</name>
    <name type="ordered locus">cbdbA776</name>
</gene>
<sequence length="265" mass="29070">MRILVSNDDGIYSPGLWALVKRLKEVGEVIVVAPDREQSATGTQVTLRQPLRVQKTHPLIPGIEAYAVEGSPCDCVILGLAKLITEPVDLVVSGINHGLNLGDDVLISGTVGAALQGYLRNIPSIAISIPVTMEEPENLDSAACITAEVARRIQNGDITKNSFLNINIPDLPLSQIEELRVTPLAHKTHIETVEEGHDGRKRYFWLRRRQLSSADNKKTDIWAIENGYITISALHERLFQQPVFTLKDAETAGILAAARSCQDKI</sequence>
<evidence type="ECO:0000255" key="1">
    <source>
        <dbReference type="HAMAP-Rule" id="MF_00060"/>
    </source>
</evidence>
<organism>
    <name type="scientific">Dehalococcoides mccartyi (strain CBDB1)</name>
    <dbReference type="NCBI Taxonomy" id="255470"/>
    <lineage>
        <taxon>Bacteria</taxon>
        <taxon>Bacillati</taxon>
        <taxon>Chloroflexota</taxon>
        <taxon>Dehalococcoidia</taxon>
        <taxon>Dehalococcoidales</taxon>
        <taxon>Dehalococcoidaceae</taxon>
        <taxon>Dehalococcoides</taxon>
    </lineage>
</organism>
<reference key="1">
    <citation type="journal article" date="2005" name="Nat. Biotechnol.">
        <title>Genome sequence of the chlorinated compound-respiring bacterium Dehalococcoides species strain CBDB1.</title>
        <authorList>
            <person name="Kube M."/>
            <person name="Beck A."/>
            <person name="Zinder S.H."/>
            <person name="Kuhl H."/>
            <person name="Reinhardt R."/>
            <person name="Adrian L."/>
        </authorList>
    </citation>
    <scope>NUCLEOTIDE SEQUENCE [LARGE SCALE GENOMIC DNA]</scope>
    <source>
        <strain>CBDB1</strain>
    </source>
</reference>
<feature type="chain" id="PRO_0000235610" description="5'-nucleotidase SurE">
    <location>
        <begin position="1"/>
        <end position="265"/>
    </location>
</feature>
<feature type="binding site" evidence="1">
    <location>
        <position position="8"/>
    </location>
    <ligand>
        <name>a divalent metal cation</name>
        <dbReference type="ChEBI" id="CHEBI:60240"/>
    </ligand>
</feature>
<feature type="binding site" evidence="1">
    <location>
        <position position="9"/>
    </location>
    <ligand>
        <name>a divalent metal cation</name>
        <dbReference type="ChEBI" id="CHEBI:60240"/>
    </ligand>
</feature>
<feature type="binding site" evidence="1">
    <location>
        <position position="39"/>
    </location>
    <ligand>
        <name>a divalent metal cation</name>
        <dbReference type="ChEBI" id="CHEBI:60240"/>
    </ligand>
</feature>
<feature type="binding site" evidence="1">
    <location>
        <position position="96"/>
    </location>
    <ligand>
        <name>a divalent metal cation</name>
        <dbReference type="ChEBI" id="CHEBI:60240"/>
    </ligand>
</feature>